<evidence type="ECO:0000255" key="1">
    <source>
        <dbReference type="HAMAP-Rule" id="MF_00315"/>
    </source>
</evidence>
<sequence length="643" mass="69004">MHLGDLKHPNELHGLSPAQLEDVARQIRERHLQVVSTSGGHLGPGLGVVELTLALYQTLDLDQDRVIWDVGHQAYPHKLITGRFNDFDSLRQQHGVAGYLKRTESDFDHFGAGHASTSISAALGMAMARDNHGESFKCVAVIGDGALTGGMALEAINHAGHLPNTRLLVVLNDNDMSISPPVGALSNVLNRARLSPPMQFLSGSVEESVRHLPFMGGEIPAELNRLKGSMRRLAVPKVGAVFEELGFTYMGPIDGHDIGEMVRTFQAAHREGGPVLVHVVTKKGKGYPYAEADQVGYHAQSAFDLGTGKAIPSSKPKPPSYSKVFGQTLVKLCEQNSRVIGITAAMATGTGLDLLQKAVPDQYVDVGIAEQHAVTLAAGMACEGLRPVVAIYSTFLQRAYDQLIHDVGIQKLPVTFVLDRAGIVGADGPTHQGQYDISYMRAIPNFTVMAPKDEAELQRMLVTCLQHDGPTALRIPRGSGEGVPLMEEGWETLPIGRGELLREGDDLMIVAYGSMVAPALATATLLEEAGLSTTVINARFLRPLDQALIHPLARRIPRVVTMEEGALPGGFGAAVLESLTDQDINVSMLRIGIPDKLVDHATPQQSKEALGLTPAQMAERILERFSNTSGDLPASASIKALQA</sequence>
<gene>
    <name evidence="1" type="primary">dxs</name>
    <name type="ordered locus">Syncc9605_1430</name>
</gene>
<keyword id="KW-0414">Isoprene biosynthesis</keyword>
<keyword id="KW-0460">Magnesium</keyword>
<keyword id="KW-0479">Metal-binding</keyword>
<keyword id="KW-0784">Thiamine biosynthesis</keyword>
<keyword id="KW-0786">Thiamine pyrophosphate</keyword>
<keyword id="KW-0808">Transferase</keyword>
<feature type="chain" id="PRO_0000256495" description="1-deoxy-D-xylulose-5-phosphate synthase">
    <location>
        <begin position="1"/>
        <end position="643"/>
    </location>
</feature>
<feature type="binding site" evidence="1">
    <location>
        <position position="72"/>
    </location>
    <ligand>
        <name>thiamine diphosphate</name>
        <dbReference type="ChEBI" id="CHEBI:58937"/>
    </ligand>
</feature>
<feature type="binding site" evidence="1">
    <location>
        <begin position="113"/>
        <end position="115"/>
    </location>
    <ligand>
        <name>thiamine diphosphate</name>
        <dbReference type="ChEBI" id="CHEBI:58937"/>
    </ligand>
</feature>
<feature type="binding site" evidence="1">
    <location>
        <position position="144"/>
    </location>
    <ligand>
        <name>Mg(2+)</name>
        <dbReference type="ChEBI" id="CHEBI:18420"/>
    </ligand>
</feature>
<feature type="binding site" evidence="1">
    <location>
        <begin position="145"/>
        <end position="146"/>
    </location>
    <ligand>
        <name>thiamine diphosphate</name>
        <dbReference type="ChEBI" id="CHEBI:58937"/>
    </ligand>
</feature>
<feature type="binding site" evidence="1">
    <location>
        <position position="174"/>
    </location>
    <ligand>
        <name>Mg(2+)</name>
        <dbReference type="ChEBI" id="CHEBI:18420"/>
    </ligand>
</feature>
<feature type="binding site" evidence="1">
    <location>
        <position position="174"/>
    </location>
    <ligand>
        <name>thiamine diphosphate</name>
        <dbReference type="ChEBI" id="CHEBI:58937"/>
    </ligand>
</feature>
<feature type="binding site" evidence="1">
    <location>
        <position position="287"/>
    </location>
    <ligand>
        <name>thiamine diphosphate</name>
        <dbReference type="ChEBI" id="CHEBI:58937"/>
    </ligand>
</feature>
<feature type="binding site" evidence="1">
    <location>
        <position position="370"/>
    </location>
    <ligand>
        <name>thiamine diphosphate</name>
        <dbReference type="ChEBI" id="CHEBI:58937"/>
    </ligand>
</feature>
<organism>
    <name type="scientific">Synechococcus sp. (strain CC9605)</name>
    <dbReference type="NCBI Taxonomy" id="110662"/>
    <lineage>
        <taxon>Bacteria</taxon>
        <taxon>Bacillati</taxon>
        <taxon>Cyanobacteriota</taxon>
        <taxon>Cyanophyceae</taxon>
        <taxon>Synechococcales</taxon>
        <taxon>Synechococcaceae</taxon>
        <taxon>Synechococcus</taxon>
    </lineage>
</organism>
<protein>
    <recommendedName>
        <fullName evidence="1">1-deoxy-D-xylulose-5-phosphate synthase</fullName>
        <ecNumber evidence="1">2.2.1.7</ecNumber>
    </recommendedName>
    <alternativeName>
        <fullName evidence="1">1-deoxyxylulose-5-phosphate synthase</fullName>
        <shortName evidence="1">DXP synthase</shortName>
        <shortName evidence="1">DXPS</shortName>
    </alternativeName>
</protein>
<name>DXS_SYNSC</name>
<reference key="1">
    <citation type="submission" date="2005-07" db="EMBL/GenBank/DDBJ databases">
        <title>Complete sequence of Synechococcus sp. CC9605.</title>
        <authorList>
            <consortium name="US DOE Joint Genome Institute"/>
            <person name="Copeland A."/>
            <person name="Lucas S."/>
            <person name="Lapidus A."/>
            <person name="Barry K."/>
            <person name="Detter J.C."/>
            <person name="Glavina T."/>
            <person name="Hammon N."/>
            <person name="Israni S."/>
            <person name="Pitluck S."/>
            <person name="Schmutz J."/>
            <person name="Martinez M."/>
            <person name="Larimer F."/>
            <person name="Land M."/>
            <person name="Kyrpides N."/>
            <person name="Ivanova N."/>
            <person name="Richardson P."/>
        </authorList>
    </citation>
    <scope>NUCLEOTIDE SEQUENCE [LARGE SCALE GENOMIC DNA]</scope>
    <source>
        <strain>CC9605</strain>
    </source>
</reference>
<comment type="function">
    <text evidence="1">Catalyzes the acyloin condensation reaction between C atoms 2 and 3 of pyruvate and glyceraldehyde 3-phosphate to yield 1-deoxy-D-xylulose-5-phosphate (DXP).</text>
</comment>
<comment type="catalytic activity">
    <reaction evidence="1">
        <text>D-glyceraldehyde 3-phosphate + pyruvate + H(+) = 1-deoxy-D-xylulose 5-phosphate + CO2</text>
        <dbReference type="Rhea" id="RHEA:12605"/>
        <dbReference type="ChEBI" id="CHEBI:15361"/>
        <dbReference type="ChEBI" id="CHEBI:15378"/>
        <dbReference type="ChEBI" id="CHEBI:16526"/>
        <dbReference type="ChEBI" id="CHEBI:57792"/>
        <dbReference type="ChEBI" id="CHEBI:59776"/>
        <dbReference type="EC" id="2.2.1.7"/>
    </reaction>
</comment>
<comment type="cofactor">
    <cofactor evidence="1">
        <name>Mg(2+)</name>
        <dbReference type="ChEBI" id="CHEBI:18420"/>
    </cofactor>
    <text evidence="1">Binds 1 Mg(2+) ion per subunit.</text>
</comment>
<comment type="cofactor">
    <cofactor evidence="1">
        <name>thiamine diphosphate</name>
        <dbReference type="ChEBI" id="CHEBI:58937"/>
    </cofactor>
    <text evidence="1">Binds 1 thiamine pyrophosphate per subunit.</text>
</comment>
<comment type="pathway">
    <text evidence="1">Metabolic intermediate biosynthesis; 1-deoxy-D-xylulose 5-phosphate biosynthesis; 1-deoxy-D-xylulose 5-phosphate from D-glyceraldehyde 3-phosphate and pyruvate: step 1/1.</text>
</comment>
<comment type="subunit">
    <text evidence="1">Homodimer.</text>
</comment>
<comment type="similarity">
    <text evidence="1">Belongs to the transketolase family. DXPS subfamily.</text>
</comment>
<proteinExistence type="inferred from homology"/>
<dbReference type="EC" id="2.2.1.7" evidence="1"/>
<dbReference type="EMBL" id="CP000110">
    <property type="protein sequence ID" value="ABB35184.1"/>
    <property type="molecule type" value="Genomic_DNA"/>
</dbReference>
<dbReference type="RefSeq" id="WP_011364399.1">
    <property type="nucleotide sequence ID" value="NC_007516.1"/>
</dbReference>
<dbReference type="SMR" id="Q3AJP8"/>
<dbReference type="STRING" id="110662.Syncc9605_1430"/>
<dbReference type="KEGG" id="syd:Syncc9605_1430"/>
<dbReference type="eggNOG" id="COG1154">
    <property type="taxonomic scope" value="Bacteria"/>
</dbReference>
<dbReference type="HOGENOM" id="CLU_009227_1_4_3"/>
<dbReference type="OrthoDB" id="9803371at2"/>
<dbReference type="UniPathway" id="UPA00064">
    <property type="reaction ID" value="UER00091"/>
</dbReference>
<dbReference type="GO" id="GO:0005829">
    <property type="term" value="C:cytosol"/>
    <property type="evidence" value="ECO:0007669"/>
    <property type="project" value="TreeGrafter"/>
</dbReference>
<dbReference type="GO" id="GO:0008661">
    <property type="term" value="F:1-deoxy-D-xylulose-5-phosphate synthase activity"/>
    <property type="evidence" value="ECO:0007669"/>
    <property type="project" value="UniProtKB-UniRule"/>
</dbReference>
<dbReference type="GO" id="GO:0000287">
    <property type="term" value="F:magnesium ion binding"/>
    <property type="evidence" value="ECO:0007669"/>
    <property type="project" value="UniProtKB-UniRule"/>
</dbReference>
<dbReference type="GO" id="GO:0030976">
    <property type="term" value="F:thiamine pyrophosphate binding"/>
    <property type="evidence" value="ECO:0007669"/>
    <property type="project" value="UniProtKB-UniRule"/>
</dbReference>
<dbReference type="GO" id="GO:0052865">
    <property type="term" value="P:1-deoxy-D-xylulose 5-phosphate biosynthetic process"/>
    <property type="evidence" value="ECO:0007669"/>
    <property type="project" value="UniProtKB-UniPathway"/>
</dbReference>
<dbReference type="GO" id="GO:0019288">
    <property type="term" value="P:isopentenyl diphosphate biosynthetic process, methylerythritol 4-phosphate pathway"/>
    <property type="evidence" value="ECO:0007669"/>
    <property type="project" value="TreeGrafter"/>
</dbReference>
<dbReference type="GO" id="GO:0016114">
    <property type="term" value="P:terpenoid biosynthetic process"/>
    <property type="evidence" value="ECO:0007669"/>
    <property type="project" value="UniProtKB-UniRule"/>
</dbReference>
<dbReference type="GO" id="GO:0009228">
    <property type="term" value="P:thiamine biosynthetic process"/>
    <property type="evidence" value="ECO:0007669"/>
    <property type="project" value="UniProtKB-UniRule"/>
</dbReference>
<dbReference type="CDD" id="cd02007">
    <property type="entry name" value="TPP_DXS"/>
    <property type="match status" value="1"/>
</dbReference>
<dbReference type="CDD" id="cd07033">
    <property type="entry name" value="TPP_PYR_DXS_TK_like"/>
    <property type="match status" value="1"/>
</dbReference>
<dbReference type="FunFam" id="3.40.50.920:FF:000002">
    <property type="entry name" value="1-deoxy-D-xylulose-5-phosphate synthase"/>
    <property type="match status" value="1"/>
</dbReference>
<dbReference type="FunFam" id="3.40.50.970:FF:000005">
    <property type="entry name" value="1-deoxy-D-xylulose-5-phosphate synthase"/>
    <property type="match status" value="1"/>
</dbReference>
<dbReference type="Gene3D" id="3.40.50.920">
    <property type="match status" value="1"/>
</dbReference>
<dbReference type="Gene3D" id="3.40.50.970">
    <property type="match status" value="2"/>
</dbReference>
<dbReference type="HAMAP" id="MF_00315">
    <property type="entry name" value="DXP_synth"/>
    <property type="match status" value="1"/>
</dbReference>
<dbReference type="InterPro" id="IPR005477">
    <property type="entry name" value="Dxylulose-5-P_synthase"/>
</dbReference>
<dbReference type="InterPro" id="IPR029061">
    <property type="entry name" value="THDP-binding"/>
</dbReference>
<dbReference type="InterPro" id="IPR009014">
    <property type="entry name" value="Transketo_C/PFOR_II"/>
</dbReference>
<dbReference type="InterPro" id="IPR005475">
    <property type="entry name" value="Transketolase-like_Pyr-bd"/>
</dbReference>
<dbReference type="InterPro" id="IPR020826">
    <property type="entry name" value="Transketolase_BS"/>
</dbReference>
<dbReference type="InterPro" id="IPR033248">
    <property type="entry name" value="Transketolase_C"/>
</dbReference>
<dbReference type="InterPro" id="IPR049557">
    <property type="entry name" value="Transketolase_CS"/>
</dbReference>
<dbReference type="NCBIfam" id="TIGR00204">
    <property type="entry name" value="dxs"/>
    <property type="match status" value="1"/>
</dbReference>
<dbReference type="NCBIfam" id="NF003933">
    <property type="entry name" value="PRK05444.2-2"/>
    <property type="match status" value="1"/>
</dbReference>
<dbReference type="PANTHER" id="PTHR43322">
    <property type="entry name" value="1-D-DEOXYXYLULOSE 5-PHOSPHATE SYNTHASE-RELATED"/>
    <property type="match status" value="1"/>
</dbReference>
<dbReference type="PANTHER" id="PTHR43322:SF5">
    <property type="entry name" value="1-DEOXY-D-XYLULOSE-5-PHOSPHATE SYNTHASE, CHLOROPLASTIC"/>
    <property type="match status" value="1"/>
</dbReference>
<dbReference type="Pfam" id="PF13292">
    <property type="entry name" value="DXP_synthase_N"/>
    <property type="match status" value="1"/>
</dbReference>
<dbReference type="Pfam" id="PF02779">
    <property type="entry name" value="Transket_pyr"/>
    <property type="match status" value="1"/>
</dbReference>
<dbReference type="Pfam" id="PF02780">
    <property type="entry name" value="Transketolase_C"/>
    <property type="match status" value="1"/>
</dbReference>
<dbReference type="SMART" id="SM00861">
    <property type="entry name" value="Transket_pyr"/>
    <property type="match status" value="1"/>
</dbReference>
<dbReference type="SUPFAM" id="SSF52518">
    <property type="entry name" value="Thiamin diphosphate-binding fold (THDP-binding)"/>
    <property type="match status" value="2"/>
</dbReference>
<dbReference type="SUPFAM" id="SSF52922">
    <property type="entry name" value="TK C-terminal domain-like"/>
    <property type="match status" value="1"/>
</dbReference>
<dbReference type="PROSITE" id="PS00801">
    <property type="entry name" value="TRANSKETOLASE_1"/>
    <property type="match status" value="1"/>
</dbReference>
<dbReference type="PROSITE" id="PS00802">
    <property type="entry name" value="TRANSKETOLASE_2"/>
    <property type="match status" value="1"/>
</dbReference>
<accession>Q3AJP8</accession>